<proteinExistence type="inferred from homology"/>
<feature type="chain" id="PRO_1000130509" description="Glucose-1-phosphate adenylyltransferase">
    <location>
        <begin position="1"/>
        <end position="412"/>
    </location>
</feature>
<feature type="binding site" evidence="1">
    <location>
        <position position="98"/>
    </location>
    <ligand>
        <name>alpha-D-glucose 1-phosphate</name>
        <dbReference type="ChEBI" id="CHEBI:58601"/>
    </ligand>
</feature>
<feature type="binding site" evidence="1">
    <location>
        <position position="163"/>
    </location>
    <ligand>
        <name>alpha-D-glucose 1-phosphate</name>
        <dbReference type="ChEBI" id="CHEBI:58601"/>
    </ligand>
</feature>
<feature type="binding site" evidence="1">
    <location>
        <begin position="178"/>
        <end position="179"/>
    </location>
    <ligand>
        <name>alpha-D-glucose 1-phosphate</name>
        <dbReference type="ChEBI" id="CHEBI:58601"/>
    </ligand>
</feature>
<feature type="binding site" evidence="1">
    <location>
        <position position="189"/>
    </location>
    <ligand>
        <name>alpha-D-glucose 1-phosphate</name>
        <dbReference type="ChEBI" id="CHEBI:58601"/>
    </ligand>
</feature>
<dbReference type="EC" id="2.7.7.27" evidence="1"/>
<dbReference type="EMBL" id="CP001185">
    <property type="protein sequence ID" value="ACJ74966.1"/>
    <property type="molecule type" value="Genomic_DNA"/>
</dbReference>
<dbReference type="RefSeq" id="WP_012579604.1">
    <property type="nucleotide sequence ID" value="NC_011653.1"/>
</dbReference>
<dbReference type="SMR" id="B7IFV2"/>
<dbReference type="STRING" id="484019.THA_475"/>
<dbReference type="KEGG" id="taf:THA_475"/>
<dbReference type="eggNOG" id="COG0448">
    <property type="taxonomic scope" value="Bacteria"/>
</dbReference>
<dbReference type="HOGENOM" id="CLU_029499_14_0_0"/>
<dbReference type="OrthoDB" id="9801810at2"/>
<dbReference type="UniPathway" id="UPA00164"/>
<dbReference type="Proteomes" id="UP000002453">
    <property type="component" value="Chromosome"/>
</dbReference>
<dbReference type="GO" id="GO:0005524">
    <property type="term" value="F:ATP binding"/>
    <property type="evidence" value="ECO:0007669"/>
    <property type="project" value="UniProtKB-KW"/>
</dbReference>
<dbReference type="GO" id="GO:0008878">
    <property type="term" value="F:glucose-1-phosphate adenylyltransferase activity"/>
    <property type="evidence" value="ECO:0007669"/>
    <property type="project" value="UniProtKB-UniRule"/>
</dbReference>
<dbReference type="GO" id="GO:0005978">
    <property type="term" value="P:glycogen biosynthetic process"/>
    <property type="evidence" value="ECO:0007669"/>
    <property type="project" value="UniProtKB-UniRule"/>
</dbReference>
<dbReference type="CDD" id="cd02508">
    <property type="entry name" value="ADP_Glucose_PP"/>
    <property type="match status" value="1"/>
</dbReference>
<dbReference type="CDD" id="cd04651">
    <property type="entry name" value="LbH_G1P_AT_C"/>
    <property type="match status" value="1"/>
</dbReference>
<dbReference type="Gene3D" id="2.160.10.10">
    <property type="entry name" value="Hexapeptide repeat proteins"/>
    <property type="match status" value="1"/>
</dbReference>
<dbReference type="Gene3D" id="3.90.550.10">
    <property type="entry name" value="Spore Coat Polysaccharide Biosynthesis Protein SpsA, Chain A"/>
    <property type="match status" value="1"/>
</dbReference>
<dbReference type="HAMAP" id="MF_00624">
    <property type="entry name" value="GlgC"/>
    <property type="match status" value="1"/>
</dbReference>
<dbReference type="InterPro" id="IPR011831">
    <property type="entry name" value="ADP-Glc_PPase"/>
</dbReference>
<dbReference type="InterPro" id="IPR005836">
    <property type="entry name" value="ADP_Glu_pyroP_CS"/>
</dbReference>
<dbReference type="InterPro" id="IPR023049">
    <property type="entry name" value="GlgC_bac"/>
</dbReference>
<dbReference type="InterPro" id="IPR056818">
    <property type="entry name" value="GlmU/GlgC-like_hexapep"/>
</dbReference>
<dbReference type="InterPro" id="IPR005835">
    <property type="entry name" value="NTP_transferase_dom"/>
</dbReference>
<dbReference type="InterPro" id="IPR029044">
    <property type="entry name" value="Nucleotide-diphossugar_trans"/>
</dbReference>
<dbReference type="InterPro" id="IPR011004">
    <property type="entry name" value="Trimer_LpxA-like_sf"/>
</dbReference>
<dbReference type="NCBIfam" id="TIGR02091">
    <property type="entry name" value="glgC"/>
    <property type="match status" value="1"/>
</dbReference>
<dbReference type="NCBIfam" id="NF003670">
    <property type="entry name" value="PRK05293.1"/>
    <property type="match status" value="1"/>
</dbReference>
<dbReference type="PANTHER" id="PTHR43523:SF2">
    <property type="entry name" value="GLUCOSE-1-PHOSPHATE ADENYLYLTRANSFERASE"/>
    <property type="match status" value="1"/>
</dbReference>
<dbReference type="PANTHER" id="PTHR43523">
    <property type="entry name" value="GLUCOSE-1-PHOSPHATE ADENYLYLTRANSFERASE-RELATED"/>
    <property type="match status" value="1"/>
</dbReference>
<dbReference type="Pfam" id="PF24894">
    <property type="entry name" value="Hexapep_GlmU"/>
    <property type="match status" value="1"/>
</dbReference>
<dbReference type="Pfam" id="PF00483">
    <property type="entry name" value="NTP_transferase"/>
    <property type="match status" value="1"/>
</dbReference>
<dbReference type="SUPFAM" id="SSF53448">
    <property type="entry name" value="Nucleotide-diphospho-sugar transferases"/>
    <property type="match status" value="1"/>
</dbReference>
<dbReference type="SUPFAM" id="SSF51161">
    <property type="entry name" value="Trimeric LpxA-like enzymes"/>
    <property type="match status" value="1"/>
</dbReference>
<dbReference type="PROSITE" id="PS00808">
    <property type="entry name" value="ADP_GLC_PYROPHOSPH_1"/>
    <property type="match status" value="1"/>
</dbReference>
<dbReference type="PROSITE" id="PS00809">
    <property type="entry name" value="ADP_GLC_PYROPHOSPH_2"/>
    <property type="match status" value="1"/>
</dbReference>
<reference key="1">
    <citation type="journal article" date="2009" name="J. Bacteriol.">
        <title>The genome of Thermosipho africanus TCF52B: lateral genetic connections to the Firmicutes and Archaea.</title>
        <authorList>
            <person name="Nesboe C.L."/>
            <person name="Bapteste E."/>
            <person name="Curtis B."/>
            <person name="Dahle H."/>
            <person name="Lopez P."/>
            <person name="Macleod D."/>
            <person name="Dlutek M."/>
            <person name="Bowman S."/>
            <person name="Zhaxybayeva O."/>
            <person name="Birkeland N.-K."/>
            <person name="Doolittle W.F."/>
        </authorList>
    </citation>
    <scope>NUCLEOTIDE SEQUENCE [LARGE SCALE GENOMIC DNA]</scope>
    <source>
        <strain>TCF52B</strain>
    </source>
</reference>
<accession>B7IFV2</accession>
<evidence type="ECO:0000255" key="1">
    <source>
        <dbReference type="HAMAP-Rule" id="MF_00624"/>
    </source>
</evidence>
<comment type="function">
    <text evidence="1">Involved in the biosynthesis of ADP-glucose, a building block required for the elongation reactions to produce glycogen. Catalyzes the reaction between ATP and alpha-D-glucose 1-phosphate (G1P) to produce pyrophosphate and ADP-Glc.</text>
</comment>
<comment type="catalytic activity">
    <reaction evidence="1">
        <text>alpha-D-glucose 1-phosphate + ATP + H(+) = ADP-alpha-D-glucose + diphosphate</text>
        <dbReference type="Rhea" id="RHEA:12120"/>
        <dbReference type="ChEBI" id="CHEBI:15378"/>
        <dbReference type="ChEBI" id="CHEBI:30616"/>
        <dbReference type="ChEBI" id="CHEBI:33019"/>
        <dbReference type="ChEBI" id="CHEBI:57498"/>
        <dbReference type="ChEBI" id="CHEBI:58601"/>
        <dbReference type="EC" id="2.7.7.27"/>
    </reaction>
</comment>
<comment type="pathway">
    <text evidence="1">Glycan biosynthesis; glycogen biosynthesis.</text>
</comment>
<comment type="subunit">
    <text evidence="1">Homotetramer.</text>
</comment>
<comment type="similarity">
    <text evidence="1">Belongs to the bacterial/plant glucose-1-phosphate adenylyltransferase family.</text>
</comment>
<protein>
    <recommendedName>
        <fullName evidence="1">Glucose-1-phosphate adenylyltransferase</fullName>
        <ecNumber evidence="1">2.7.7.27</ecNumber>
    </recommendedName>
    <alternativeName>
        <fullName evidence="1">ADP-glucose pyrophosphorylase</fullName>
        <shortName evidence="1">ADPGlc PPase</shortName>
    </alternativeName>
    <alternativeName>
        <fullName evidence="1">ADP-glucose synthase</fullName>
    </alternativeName>
</protein>
<gene>
    <name evidence="1" type="primary">glgC</name>
    <name type="ordered locus">THA_475</name>
</gene>
<keyword id="KW-0067">ATP-binding</keyword>
<keyword id="KW-0119">Carbohydrate metabolism</keyword>
<keyword id="KW-0320">Glycogen biosynthesis</keyword>
<keyword id="KW-0321">Glycogen metabolism</keyword>
<keyword id="KW-0547">Nucleotide-binding</keyword>
<keyword id="KW-0548">Nucleotidyltransferase</keyword>
<keyword id="KW-1185">Reference proteome</keyword>
<keyword id="KW-0808">Transferase</keyword>
<name>GLGC_THEAB</name>
<organism>
    <name type="scientific">Thermosipho africanus (strain TCF52B)</name>
    <dbReference type="NCBI Taxonomy" id="484019"/>
    <lineage>
        <taxon>Bacteria</taxon>
        <taxon>Thermotogati</taxon>
        <taxon>Thermotogota</taxon>
        <taxon>Thermotogae</taxon>
        <taxon>Thermotogales</taxon>
        <taxon>Fervidobacteriaceae</taxon>
        <taxon>Thermosipho</taxon>
    </lineage>
</organism>
<sequence>MKNVVALILAGGQGTRLGVLTEKIAKPAVQFGGKYRLIDFTLSNCVNSGIYKIGVLTQYKPHLLNQHIGIGKPWDLDRKDGGVTILQPYYTEKKGVWYNGTADAVYRNIEFVDDYNPEYVVILSGDHIYSMDYNELLDYHKAKSALATVACMEVPLSEASRFGIMVTDLENRIIEFQEKPKQPKSTLASLGIYVFQWSFIREVLIEDAKNDQSSHDFGKDIIPKIIQTERVFAFPFDGYWKDVGTIYSYWESNLELTRPIPPFNIHDENWRIYTHSKEMPPAYIADSTKVKNSLISEGCEIYGAVSNSVLAQGVEIGKGSIVKNSVIMSNVRIGENCYIENAIIAENVVIGDFVKIGVGEFAESKLNKKVYNSEITVIGMDSIIESKVEIGKNCVVGIDMIVNKNLNSGEYI</sequence>